<protein>
    <recommendedName>
        <fullName evidence="1">Large ribosomal subunit protein bL36</fullName>
    </recommendedName>
    <alternativeName>
        <fullName evidence="2">50S ribosomal protein L36</fullName>
    </alternativeName>
</protein>
<comment type="similarity">
    <text evidence="1">Belongs to the bacterial ribosomal protein bL36 family.</text>
</comment>
<reference key="1">
    <citation type="journal article" date="2009" name="PLoS Genet.">
        <title>Alliance of proteomics and genomics to unravel the specificities of Sahara bacterium Deinococcus deserti.</title>
        <authorList>
            <person name="de Groot A."/>
            <person name="Dulermo R."/>
            <person name="Ortet P."/>
            <person name="Blanchard L."/>
            <person name="Guerin P."/>
            <person name="Fernandez B."/>
            <person name="Vacherie B."/>
            <person name="Dossat C."/>
            <person name="Jolivet E."/>
            <person name="Siguier P."/>
            <person name="Chandler M."/>
            <person name="Barakat M."/>
            <person name="Dedieu A."/>
            <person name="Barbe V."/>
            <person name="Heulin T."/>
            <person name="Sommer S."/>
            <person name="Achouak W."/>
            <person name="Armengaud J."/>
        </authorList>
    </citation>
    <scope>NUCLEOTIDE SEQUENCE [LARGE SCALE GENOMIC DNA]</scope>
    <source>
        <strain>DSM 17065 / CIP 109153 / LMG 22923 / VCD115</strain>
    </source>
</reference>
<organism>
    <name type="scientific">Deinococcus deserti (strain DSM 17065 / CIP 109153 / LMG 22923 / VCD115)</name>
    <dbReference type="NCBI Taxonomy" id="546414"/>
    <lineage>
        <taxon>Bacteria</taxon>
        <taxon>Thermotogati</taxon>
        <taxon>Deinococcota</taxon>
        <taxon>Deinococci</taxon>
        <taxon>Deinococcales</taxon>
        <taxon>Deinococcaceae</taxon>
        <taxon>Deinococcus</taxon>
    </lineage>
</organism>
<keyword id="KW-1185">Reference proteome</keyword>
<keyword id="KW-0687">Ribonucleoprotein</keyword>
<keyword id="KW-0689">Ribosomal protein</keyword>
<accession>C1CXD8</accession>
<name>RL36_DEIDV</name>
<feature type="chain" id="PRO_1000204544" description="Large ribosomal subunit protein bL36">
    <location>
        <begin position="1"/>
        <end position="37"/>
    </location>
</feature>
<dbReference type="EMBL" id="CP001114">
    <property type="protein sequence ID" value="ACO46855.1"/>
    <property type="molecule type" value="Genomic_DNA"/>
</dbReference>
<dbReference type="RefSeq" id="WP_012693977.1">
    <property type="nucleotide sequence ID" value="NC_012526.1"/>
</dbReference>
<dbReference type="SMR" id="C1CXD8"/>
<dbReference type="STRING" id="546414.Deide_18670"/>
<dbReference type="PaxDb" id="546414-Deide_18670"/>
<dbReference type="GeneID" id="59163706"/>
<dbReference type="KEGG" id="ddr:Deide_18670"/>
<dbReference type="eggNOG" id="COG0257">
    <property type="taxonomic scope" value="Bacteria"/>
</dbReference>
<dbReference type="HOGENOM" id="CLU_135723_6_2_0"/>
<dbReference type="OrthoDB" id="9802520at2"/>
<dbReference type="Proteomes" id="UP000002208">
    <property type="component" value="Chromosome"/>
</dbReference>
<dbReference type="GO" id="GO:0005737">
    <property type="term" value="C:cytoplasm"/>
    <property type="evidence" value="ECO:0007669"/>
    <property type="project" value="UniProtKB-ARBA"/>
</dbReference>
<dbReference type="GO" id="GO:1990904">
    <property type="term" value="C:ribonucleoprotein complex"/>
    <property type="evidence" value="ECO:0007669"/>
    <property type="project" value="UniProtKB-KW"/>
</dbReference>
<dbReference type="GO" id="GO:0005840">
    <property type="term" value="C:ribosome"/>
    <property type="evidence" value="ECO:0007669"/>
    <property type="project" value="UniProtKB-KW"/>
</dbReference>
<dbReference type="GO" id="GO:0003735">
    <property type="term" value="F:structural constituent of ribosome"/>
    <property type="evidence" value="ECO:0007669"/>
    <property type="project" value="InterPro"/>
</dbReference>
<dbReference type="GO" id="GO:0006412">
    <property type="term" value="P:translation"/>
    <property type="evidence" value="ECO:0007669"/>
    <property type="project" value="UniProtKB-UniRule"/>
</dbReference>
<dbReference type="HAMAP" id="MF_00251">
    <property type="entry name" value="Ribosomal_bL36"/>
    <property type="match status" value="1"/>
</dbReference>
<dbReference type="InterPro" id="IPR000473">
    <property type="entry name" value="Ribosomal_bL36"/>
</dbReference>
<dbReference type="InterPro" id="IPR035977">
    <property type="entry name" value="Ribosomal_bL36_sp"/>
</dbReference>
<dbReference type="NCBIfam" id="TIGR01022">
    <property type="entry name" value="rpmJ_bact"/>
    <property type="match status" value="1"/>
</dbReference>
<dbReference type="PANTHER" id="PTHR42888">
    <property type="entry name" value="50S RIBOSOMAL PROTEIN L36, CHLOROPLASTIC"/>
    <property type="match status" value="1"/>
</dbReference>
<dbReference type="PANTHER" id="PTHR42888:SF1">
    <property type="entry name" value="LARGE RIBOSOMAL SUBUNIT PROTEIN BL36C"/>
    <property type="match status" value="1"/>
</dbReference>
<dbReference type="Pfam" id="PF00444">
    <property type="entry name" value="Ribosomal_L36"/>
    <property type="match status" value="1"/>
</dbReference>
<dbReference type="SUPFAM" id="SSF57840">
    <property type="entry name" value="Ribosomal protein L36"/>
    <property type="match status" value="1"/>
</dbReference>
<dbReference type="PROSITE" id="PS00828">
    <property type="entry name" value="RIBOSOMAL_L36"/>
    <property type="match status" value="1"/>
</dbReference>
<evidence type="ECO:0000255" key="1">
    <source>
        <dbReference type="HAMAP-Rule" id="MF_00251"/>
    </source>
</evidence>
<evidence type="ECO:0000305" key="2"/>
<sequence length="37" mass="4323">MKVRSSVKKMCDNCKVIRRHGRVLVICSNVKHKQRQG</sequence>
<gene>
    <name evidence="1" type="primary">rpmJ</name>
    <name type="ordered locus">Deide_18670</name>
</gene>
<proteinExistence type="inferred from homology"/>